<comment type="function">
    <text evidence="1">Catalyzes the last two sequential reactions in the de novo biosynthetic pathway for UDP-N-acetylglucosamine (UDP-GlcNAc). The C-terminal domain catalyzes the transfer of acetyl group from acetyl coenzyme A to glucosamine-1-phosphate (GlcN-1-P) to produce N-acetylglucosamine-1-phosphate (GlcNAc-1-P), which is converted into UDP-GlcNAc by the transfer of uridine 5-monophosphate (from uridine 5-triphosphate), a reaction catalyzed by the N-terminal domain.</text>
</comment>
<comment type="catalytic activity">
    <reaction evidence="1">
        <text>alpha-D-glucosamine 1-phosphate + acetyl-CoA = N-acetyl-alpha-D-glucosamine 1-phosphate + CoA + H(+)</text>
        <dbReference type="Rhea" id="RHEA:13725"/>
        <dbReference type="ChEBI" id="CHEBI:15378"/>
        <dbReference type="ChEBI" id="CHEBI:57287"/>
        <dbReference type="ChEBI" id="CHEBI:57288"/>
        <dbReference type="ChEBI" id="CHEBI:57776"/>
        <dbReference type="ChEBI" id="CHEBI:58516"/>
        <dbReference type="EC" id="2.3.1.157"/>
    </reaction>
</comment>
<comment type="catalytic activity">
    <reaction evidence="1">
        <text>N-acetyl-alpha-D-glucosamine 1-phosphate + UTP + H(+) = UDP-N-acetyl-alpha-D-glucosamine + diphosphate</text>
        <dbReference type="Rhea" id="RHEA:13509"/>
        <dbReference type="ChEBI" id="CHEBI:15378"/>
        <dbReference type="ChEBI" id="CHEBI:33019"/>
        <dbReference type="ChEBI" id="CHEBI:46398"/>
        <dbReference type="ChEBI" id="CHEBI:57705"/>
        <dbReference type="ChEBI" id="CHEBI:57776"/>
        <dbReference type="EC" id="2.7.7.23"/>
    </reaction>
</comment>
<comment type="cofactor">
    <cofactor evidence="1">
        <name>Mg(2+)</name>
        <dbReference type="ChEBI" id="CHEBI:18420"/>
    </cofactor>
    <text evidence="1">Binds 1 Mg(2+) ion per subunit.</text>
</comment>
<comment type="pathway">
    <text evidence="1">Nucleotide-sugar biosynthesis; UDP-N-acetyl-alpha-D-glucosamine biosynthesis; N-acetyl-alpha-D-glucosamine 1-phosphate from alpha-D-glucosamine 6-phosphate (route II): step 2/2.</text>
</comment>
<comment type="pathway">
    <text evidence="1">Nucleotide-sugar biosynthesis; UDP-N-acetyl-alpha-D-glucosamine biosynthesis; UDP-N-acetyl-alpha-D-glucosamine from N-acetyl-alpha-D-glucosamine 1-phosphate: step 1/1.</text>
</comment>
<comment type="pathway">
    <text evidence="1">Bacterial outer membrane biogenesis; LPS lipid A biosynthesis.</text>
</comment>
<comment type="subunit">
    <text evidence="1">Homotrimer.</text>
</comment>
<comment type="subcellular location">
    <subcellularLocation>
        <location evidence="1">Cytoplasm</location>
    </subcellularLocation>
</comment>
<comment type="similarity">
    <text evidence="1">In the N-terminal section; belongs to the N-acetylglucosamine-1-phosphate uridyltransferase family.</text>
</comment>
<comment type="similarity">
    <text evidence="1">In the C-terminal section; belongs to the transferase hexapeptide repeat family.</text>
</comment>
<gene>
    <name evidence="1" type="primary">glmU</name>
    <name type="ordered locus">HCH_07069</name>
</gene>
<feature type="chain" id="PRO_0000244295" description="Bifunctional protein GlmU">
    <location>
        <begin position="1"/>
        <end position="452"/>
    </location>
</feature>
<feature type="region of interest" description="Pyrophosphorylase" evidence="1">
    <location>
        <begin position="1"/>
        <end position="226"/>
    </location>
</feature>
<feature type="region of interest" description="Linker" evidence="1">
    <location>
        <begin position="227"/>
        <end position="247"/>
    </location>
</feature>
<feature type="region of interest" description="N-acetyltransferase" evidence="1">
    <location>
        <begin position="248"/>
        <end position="452"/>
    </location>
</feature>
<feature type="active site" description="Proton acceptor" evidence="1">
    <location>
        <position position="360"/>
    </location>
</feature>
<feature type="binding site" evidence="1">
    <location>
        <begin position="8"/>
        <end position="11"/>
    </location>
    <ligand>
        <name>UDP-N-acetyl-alpha-D-glucosamine</name>
        <dbReference type="ChEBI" id="CHEBI:57705"/>
    </ligand>
</feature>
<feature type="binding site" evidence="1">
    <location>
        <position position="22"/>
    </location>
    <ligand>
        <name>UDP-N-acetyl-alpha-D-glucosamine</name>
        <dbReference type="ChEBI" id="CHEBI:57705"/>
    </ligand>
</feature>
<feature type="binding site" evidence="1">
    <location>
        <position position="73"/>
    </location>
    <ligand>
        <name>UDP-N-acetyl-alpha-D-glucosamine</name>
        <dbReference type="ChEBI" id="CHEBI:57705"/>
    </ligand>
</feature>
<feature type="binding site" evidence="1">
    <location>
        <begin position="78"/>
        <end position="79"/>
    </location>
    <ligand>
        <name>UDP-N-acetyl-alpha-D-glucosamine</name>
        <dbReference type="ChEBI" id="CHEBI:57705"/>
    </ligand>
</feature>
<feature type="binding site" evidence="1">
    <location>
        <begin position="100"/>
        <end position="102"/>
    </location>
    <ligand>
        <name>UDP-N-acetyl-alpha-D-glucosamine</name>
        <dbReference type="ChEBI" id="CHEBI:57705"/>
    </ligand>
</feature>
<feature type="binding site" evidence="1">
    <location>
        <position position="102"/>
    </location>
    <ligand>
        <name>Mg(2+)</name>
        <dbReference type="ChEBI" id="CHEBI:18420"/>
    </ligand>
</feature>
<feature type="binding site" evidence="1">
    <location>
        <position position="136"/>
    </location>
    <ligand>
        <name>UDP-N-acetyl-alpha-D-glucosamine</name>
        <dbReference type="ChEBI" id="CHEBI:57705"/>
    </ligand>
</feature>
<feature type="binding site" evidence="1">
    <location>
        <position position="151"/>
    </location>
    <ligand>
        <name>UDP-N-acetyl-alpha-D-glucosamine</name>
        <dbReference type="ChEBI" id="CHEBI:57705"/>
    </ligand>
</feature>
<feature type="binding site" evidence="1">
    <location>
        <position position="166"/>
    </location>
    <ligand>
        <name>UDP-N-acetyl-alpha-D-glucosamine</name>
        <dbReference type="ChEBI" id="CHEBI:57705"/>
    </ligand>
</feature>
<feature type="binding site" evidence="1">
    <location>
        <position position="224"/>
    </location>
    <ligand>
        <name>Mg(2+)</name>
        <dbReference type="ChEBI" id="CHEBI:18420"/>
    </ligand>
</feature>
<feature type="binding site" evidence="1">
    <location>
        <position position="224"/>
    </location>
    <ligand>
        <name>UDP-N-acetyl-alpha-D-glucosamine</name>
        <dbReference type="ChEBI" id="CHEBI:57705"/>
    </ligand>
</feature>
<feature type="binding site" evidence="1">
    <location>
        <position position="330"/>
    </location>
    <ligand>
        <name>UDP-N-acetyl-alpha-D-glucosamine</name>
        <dbReference type="ChEBI" id="CHEBI:57705"/>
    </ligand>
</feature>
<feature type="binding site" evidence="1">
    <location>
        <position position="348"/>
    </location>
    <ligand>
        <name>UDP-N-acetyl-alpha-D-glucosamine</name>
        <dbReference type="ChEBI" id="CHEBI:57705"/>
    </ligand>
</feature>
<feature type="binding site" evidence="1">
    <location>
        <position position="363"/>
    </location>
    <ligand>
        <name>UDP-N-acetyl-alpha-D-glucosamine</name>
        <dbReference type="ChEBI" id="CHEBI:57705"/>
    </ligand>
</feature>
<feature type="binding site" evidence="1">
    <location>
        <position position="374"/>
    </location>
    <ligand>
        <name>UDP-N-acetyl-alpha-D-glucosamine</name>
        <dbReference type="ChEBI" id="CHEBI:57705"/>
    </ligand>
</feature>
<feature type="binding site" evidence="1">
    <location>
        <position position="377"/>
    </location>
    <ligand>
        <name>acetyl-CoA</name>
        <dbReference type="ChEBI" id="CHEBI:57288"/>
    </ligand>
</feature>
<feature type="binding site" evidence="1">
    <location>
        <begin position="383"/>
        <end position="384"/>
    </location>
    <ligand>
        <name>acetyl-CoA</name>
        <dbReference type="ChEBI" id="CHEBI:57288"/>
    </ligand>
</feature>
<feature type="binding site" evidence="1">
    <location>
        <position position="402"/>
    </location>
    <ligand>
        <name>acetyl-CoA</name>
        <dbReference type="ChEBI" id="CHEBI:57288"/>
    </ligand>
</feature>
<feature type="binding site" evidence="1">
    <location>
        <position position="420"/>
    </location>
    <ligand>
        <name>acetyl-CoA</name>
        <dbReference type="ChEBI" id="CHEBI:57288"/>
    </ligand>
</feature>
<feature type="binding site" evidence="1">
    <location>
        <position position="437"/>
    </location>
    <ligand>
        <name>acetyl-CoA</name>
        <dbReference type="ChEBI" id="CHEBI:57288"/>
    </ligand>
</feature>
<keyword id="KW-0012">Acyltransferase</keyword>
<keyword id="KW-0133">Cell shape</keyword>
<keyword id="KW-0961">Cell wall biogenesis/degradation</keyword>
<keyword id="KW-0963">Cytoplasm</keyword>
<keyword id="KW-0460">Magnesium</keyword>
<keyword id="KW-0479">Metal-binding</keyword>
<keyword id="KW-0511">Multifunctional enzyme</keyword>
<keyword id="KW-0548">Nucleotidyltransferase</keyword>
<keyword id="KW-0573">Peptidoglycan synthesis</keyword>
<keyword id="KW-1185">Reference proteome</keyword>
<keyword id="KW-0677">Repeat</keyword>
<keyword id="KW-0808">Transferase</keyword>
<proteinExistence type="inferred from homology"/>
<protein>
    <recommendedName>
        <fullName evidence="1">Bifunctional protein GlmU</fullName>
    </recommendedName>
    <domain>
        <recommendedName>
            <fullName evidence="1">UDP-N-acetylglucosamine pyrophosphorylase</fullName>
            <ecNumber evidence="1">2.7.7.23</ecNumber>
        </recommendedName>
        <alternativeName>
            <fullName evidence="1">N-acetylglucosamine-1-phosphate uridyltransferase</fullName>
        </alternativeName>
    </domain>
    <domain>
        <recommendedName>
            <fullName evidence="1">Glucosamine-1-phosphate N-acetyltransferase</fullName>
            <ecNumber evidence="1">2.3.1.157</ecNumber>
        </recommendedName>
    </domain>
</protein>
<sequence length="452" mass="47853">MSLHIIILAAGQGTRMKSELPKVMHCVAGKPLVQHVIDTARRLEPENITVVYGHKGDVVQAGVSGPGLLWAHQAEQLGTGHAVAQGLQNLSDDGQALILYGDVPLTSAATLKNFLAVSQGKLGVLTVTLDNPTGYGRIVRNDAGSVISIVEQKDATEAQKAINEINTGIMAVPVSRLKEWLPKLSNSNAQGEYYLTDIVALAVESGVDIVTAQPSFLHEVEGVNNRIQLAALERAYQQQVAEELMLAGATLRDPARVDVRGVLNVGRDVEIDVNAVFEGDVTLGDRVKIGPNCVIRNAVIANDVTIEASSIIEDARIDAFATVGPFARLRPGAHLFEKAKVGNFVEIKKADIGPGSKVNHLSYVGDATVGSNVNIGAGTITCNYDGANKFKTLIEDDVFVGSNTALVAPVTLGKGATIGAGSTVTKDVSDKQLAVARAQQRNIDGWTRPVKK</sequence>
<evidence type="ECO:0000255" key="1">
    <source>
        <dbReference type="HAMAP-Rule" id="MF_01631"/>
    </source>
</evidence>
<organism>
    <name type="scientific">Hahella chejuensis (strain KCTC 2396)</name>
    <dbReference type="NCBI Taxonomy" id="349521"/>
    <lineage>
        <taxon>Bacteria</taxon>
        <taxon>Pseudomonadati</taxon>
        <taxon>Pseudomonadota</taxon>
        <taxon>Gammaproteobacteria</taxon>
        <taxon>Oceanospirillales</taxon>
        <taxon>Hahellaceae</taxon>
        <taxon>Hahella</taxon>
    </lineage>
</organism>
<accession>Q2S6P3</accession>
<name>GLMU_HAHCH</name>
<reference key="1">
    <citation type="journal article" date="2005" name="Nucleic Acids Res.">
        <title>Genomic blueprint of Hahella chejuensis, a marine microbe producing an algicidal agent.</title>
        <authorList>
            <person name="Jeong H."/>
            <person name="Yim J.H."/>
            <person name="Lee C."/>
            <person name="Choi S.-H."/>
            <person name="Park Y.K."/>
            <person name="Yoon S.H."/>
            <person name="Hur C.-G."/>
            <person name="Kang H.-Y."/>
            <person name="Kim D."/>
            <person name="Lee H.H."/>
            <person name="Park K.H."/>
            <person name="Park S.-H."/>
            <person name="Park H.-S."/>
            <person name="Lee H.K."/>
            <person name="Oh T.K."/>
            <person name="Kim J.F."/>
        </authorList>
    </citation>
    <scope>NUCLEOTIDE SEQUENCE [LARGE SCALE GENOMIC DNA]</scope>
    <source>
        <strain>KCTC 2396</strain>
    </source>
</reference>
<dbReference type="EC" id="2.7.7.23" evidence="1"/>
<dbReference type="EC" id="2.3.1.157" evidence="1"/>
<dbReference type="EMBL" id="CP000155">
    <property type="protein sequence ID" value="ABC33681.1"/>
    <property type="molecule type" value="Genomic_DNA"/>
</dbReference>
<dbReference type="RefSeq" id="WP_011400731.1">
    <property type="nucleotide sequence ID" value="NC_007645.1"/>
</dbReference>
<dbReference type="SMR" id="Q2S6P3"/>
<dbReference type="STRING" id="349521.HCH_07069"/>
<dbReference type="KEGG" id="hch:HCH_07069"/>
<dbReference type="eggNOG" id="COG1207">
    <property type="taxonomic scope" value="Bacteria"/>
</dbReference>
<dbReference type="HOGENOM" id="CLU_029499_15_2_6"/>
<dbReference type="OrthoDB" id="9775031at2"/>
<dbReference type="UniPathway" id="UPA00113">
    <property type="reaction ID" value="UER00532"/>
</dbReference>
<dbReference type="UniPathway" id="UPA00113">
    <property type="reaction ID" value="UER00533"/>
</dbReference>
<dbReference type="UniPathway" id="UPA00973"/>
<dbReference type="Proteomes" id="UP000000238">
    <property type="component" value="Chromosome"/>
</dbReference>
<dbReference type="GO" id="GO:0005737">
    <property type="term" value="C:cytoplasm"/>
    <property type="evidence" value="ECO:0007669"/>
    <property type="project" value="UniProtKB-SubCell"/>
</dbReference>
<dbReference type="GO" id="GO:0016020">
    <property type="term" value="C:membrane"/>
    <property type="evidence" value="ECO:0007669"/>
    <property type="project" value="GOC"/>
</dbReference>
<dbReference type="GO" id="GO:0019134">
    <property type="term" value="F:glucosamine-1-phosphate N-acetyltransferase activity"/>
    <property type="evidence" value="ECO:0007669"/>
    <property type="project" value="UniProtKB-UniRule"/>
</dbReference>
<dbReference type="GO" id="GO:0000287">
    <property type="term" value="F:magnesium ion binding"/>
    <property type="evidence" value="ECO:0007669"/>
    <property type="project" value="UniProtKB-UniRule"/>
</dbReference>
<dbReference type="GO" id="GO:0003977">
    <property type="term" value="F:UDP-N-acetylglucosamine diphosphorylase activity"/>
    <property type="evidence" value="ECO:0007669"/>
    <property type="project" value="UniProtKB-UniRule"/>
</dbReference>
<dbReference type="GO" id="GO:0000902">
    <property type="term" value="P:cell morphogenesis"/>
    <property type="evidence" value="ECO:0007669"/>
    <property type="project" value="UniProtKB-UniRule"/>
</dbReference>
<dbReference type="GO" id="GO:0071555">
    <property type="term" value="P:cell wall organization"/>
    <property type="evidence" value="ECO:0007669"/>
    <property type="project" value="UniProtKB-KW"/>
</dbReference>
<dbReference type="GO" id="GO:0009245">
    <property type="term" value="P:lipid A biosynthetic process"/>
    <property type="evidence" value="ECO:0007669"/>
    <property type="project" value="UniProtKB-UniRule"/>
</dbReference>
<dbReference type="GO" id="GO:0009252">
    <property type="term" value="P:peptidoglycan biosynthetic process"/>
    <property type="evidence" value="ECO:0007669"/>
    <property type="project" value="UniProtKB-UniRule"/>
</dbReference>
<dbReference type="GO" id="GO:0008360">
    <property type="term" value="P:regulation of cell shape"/>
    <property type="evidence" value="ECO:0007669"/>
    <property type="project" value="UniProtKB-KW"/>
</dbReference>
<dbReference type="GO" id="GO:0006048">
    <property type="term" value="P:UDP-N-acetylglucosamine biosynthetic process"/>
    <property type="evidence" value="ECO:0007669"/>
    <property type="project" value="UniProtKB-UniPathway"/>
</dbReference>
<dbReference type="CDD" id="cd02540">
    <property type="entry name" value="GT2_GlmU_N_bac"/>
    <property type="match status" value="1"/>
</dbReference>
<dbReference type="CDD" id="cd03353">
    <property type="entry name" value="LbH_GlmU_C"/>
    <property type="match status" value="1"/>
</dbReference>
<dbReference type="Gene3D" id="2.160.10.10">
    <property type="entry name" value="Hexapeptide repeat proteins"/>
    <property type="match status" value="1"/>
</dbReference>
<dbReference type="Gene3D" id="3.90.550.10">
    <property type="entry name" value="Spore Coat Polysaccharide Biosynthesis Protein SpsA, Chain A"/>
    <property type="match status" value="1"/>
</dbReference>
<dbReference type="HAMAP" id="MF_01631">
    <property type="entry name" value="GlmU"/>
    <property type="match status" value="1"/>
</dbReference>
<dbReference type="InterPro" id="IPR005882">
    <property type="entry name" value="Bifunctional_GlmU"/>
</dbReference>
<dbReference type="InterPro" id="IPR050065">
    <property type="entry name" value="GlmU-like"/>
</dbReference>
<dbReference type="InterPro" id="IPR038009">
    <property type="entry name" value="GlmU_C_LbH"/>
</dbReference>
<dbReference type="InterPro" id="IPR001451">
    <property type="entry name" value="Hexapep"/>
</dbReference>
<dbReference type="InterPro" id="IPR018357">
    <property type="entry name" value="Hexapep_transf_CS"/>
</dbReference>
<dbReference type="InterPro" id="IPR025877">
    <property type="entry name" value="MobA-like_NTP_Trfase"/>
</dbReference>
<dbReference type="InterPro" id="IPR029044">
    <property type="entry name" value="Nucleotide-diphossugar_trans"/>
</dbReference>
<dbReference type="InterPro" id="IPR011004">
    <property type="entry name" value="Trimer_LpxA-like_sf"/>
</dbReference>
<dbReference type="NCBIfam" id="TIGR01173">
    <property type="entry name" value="glmU"/>
    <property type="match status" value="1"/>
</dbReference>
<dbReference type="PANTHER" id="PTHR43584:SF3">
    <property type="entry name" value="BIFUNCTIONAL PROTEIN GLMU"/>
    <property type="match status" value="1"/>
</dbReference>
<dbReference type="PANTHER" id="PTHR43584">
    <property type="entry name" value="NUCLEOTIDYL TRANSFERASE"/>
    <property type="match status" value="1"/>
</dbReference>
<dbReference type="Pfam" id="PF00132">
    <property type="entry name" value="Hexapep"/>
    <property type="match status" value="1"/>
</dbReference>
<dbReference type="Pfam" id="PF14602">
    <property type="entry name" value="Hexapep_2"/>
    <property type="match status" value="1"/>
</dbReference>
<dbReference type="Pfam" id="PF12804">
    <property type="entry name" value="NTP_transf_3"/>
    <property type="match status" value="1"/>
</dbReference>
<dbReference type="SUPFAM" id="SSF53448">
    <property type="entry name" value="Nucleotide-diphospho-sugar transferases"/>
    <property type="match status" value="1"/>
</dbReference>
<dbReference type="SUPFAM" id="SSF51161">
    <property type="entry name" value="Trimeric LpxA-like enzymes"/>
    <property type="match status" value="1"/>
</dbReference>
<dbReference type="PROSITE" id="PS00101">
    <property type="entry name" value="HEXAPEP_TRANSFERASES"/>
    <property type="match status" value="1"/>
</dbReference>